<organism>
    <name type="scientific">Bacillus cereus (strain AH187)</name>
    <dbReference type="NCBI Taxonomy" id="405534"/>
    <lineage>
        <taxon>Bacteria</taxon>
        <taxon>Bacillati</taxon>
        <taxon>Bacillota</taxon>
        <taxon>Bacilli</taxon>
        <taxon>Bacillales</taxon>
        <taxon>Bacillaceae</taxon>
        <taxon>Bacillus</taxon>
        <taxon>Bacillus cereus group</taxon>
    </lineage>
</organism>
<accession>B7HS29</accession>
<proteinExistence type="inferred from homology"/>
<feature type="chain" id="PRO_1000117827" description="Phosphoribosylaminoimidazole-succinocarboxamide synthase">
    <location>
        <begin position="1"/>
        <end position="239"/>
    </location>
</feature>
<dbReference type="EC" id="6.3.2.6" evidence="1"/>
<dbReference type="EMBL" id="CP001177">
    <property type="protein sequence ID" value="ACJ80908.1"/>
    <property type="molecule type" value="Genomic_DNA"/>
</dbReference>
<dbReference type="SMR" id="B7HS29"/>
<dbReference type="KEGG" id="bcr:BCAH187_A0364"/>
<dbReference type="HOGENOM" id="CLU_061495_2_0_9"/>
<dbReference type="UniPathway" id="UPA00074">
    <property type="reaction ID" value="UER00131"/>
</dbReference>
<dbReference type="Proteomes" id="UP000002214">
    <property type="component" value="Chromosome"/>
</dbReference>
<dbReference type="GO" id="GO:0005524">
    <property type="term" value="F:ATP binding"/>
    <property type="evidence" value="ECO:0007669"/>
    <property type="project" value="UniProtKB-KW"/>
</dbReference>
<dbReference type="GO" id="GO:0004639">
    <property type="term" value="F:phosphoribosylaminoimidazolesuccinocarboxamide synthase activity"/>
    <property type="evidence" value="ECO:0007669"/>
    <property type="project" value="UniProtKB-UniRule"/>
</dbReference>
<dbReference type="GO" id="GO:0006189">
    <property type="term" value="P:'de novo' IMP biosynthetic process"/>
    <property type="evidence" value="ECO:0007669"/>
    <property type="project" value="UniProtKB-UniRule"/>
</dbReference>
<dbReference type="GO" id="GO:0009236">
    <property type="term" value="P:cobalamin biosynthetic process"/>
    <property type="evidence" value="ECO:0007669"/>
    <property type="project" value="InterPro"/>
</dbReference>
<dbReference type="CDD" id="cd01415">
    <property type="entry name" value="SAICAR_synt_PurC"/>
    <property type="match status" value="1"/>
</dbReference>
<dbReference type="FunFam" id="3.30.200.20:FF:000189">
    <property type="entry name" value="Phosphoribosylaminoimidazole-succinocarboxamide synthase"/>
    <property type="match status" value="1"/>
</dbReference>
<dbReference type="FunFam" id="3.30.470.20:FF:000006">
    <property type="entry name" value="Phosphoribosylaminoimidazole-succinocarboxamide synthase"/>
    <property type="match status" value="1"/>
</dbReference>
<dbReference type="Gene3D" id="3.30.470.20">
    <property type="entry name" value="ATP-grasp fold, B domain"/>
    <property type="match status" value="1"/>
</dbReference>
<dbReference type="Gene3D" id="3.30.200.20">
    <property type="entry name" value="Phosphorylase Kinase, domain 1"/>
    <property type="match status" value="1"/>
</dbReference>
<dbReference type="HAMAP" id="MF_00137">
    <property type="entry name" value="SAICAR_synth"/>
    <property type="match status" value="1"/>
</dbReference>
<dbReference type="InterPro" id="IPR028923">
    <property type="entry name" value="SAICAR_synt/ADE2_N"/>
</dbReference>
<dbReference type="InterPro" id="IPR033934">
    <property type="entry name" value="SAICAR_synt_PurC"/>
</dbReference>
<dbReference type="InterPro" id="IPR001636">
    <property type="entry name" value="SAICAR_synth"/>
</dbReference>
<dbReference type="InterPro" id="IPR050089">
    <property type="entry name" value="SAICAR_synthetase"/>
</dbReference>
<dbReference type="InterPro" id="IPR018236">
    <property type="entry name" value="SAICAR_synthetase_CS"/>
</dbReference>
<dbReference type="NCBIfam" id="TIGR00081">
    <property type="entry name" value="purC"/>
    <property type="match status" value="1"/>
</dbReference>
<dbReference type="PANTHER" id="PTHR43599">
    <property type="entry name" value="MULTIFUNCTIONAL PROTEIN ADE2"/>
    <property type="match status" value="1"/>
</dbReference>
<dbReference type="PANTHER" id="PTHR43599:SF3">
    <property type="entry name" value="SI:DKEY-6E2.2"/>
    <property type="match status" value="1"/>
</dbReference>
<dbReference type="Pfam" id="PF01259">
    <property type="entry name" value="SAICAR_synt"/>
    <property type="match status" value="1"/>
</dbReference>
<dbReference type="SUPFAM" id="SSF56104">
    <property type="entry name" value="SAICAR synthase-like"/>
    <property type="match status" value="1"/>
</dbReference>
<dbReference type="PROSITE" id="PS01057">
    <property type="entry name" value="SAICAR_SYNTHETASE_1"/>
    <property type="match status" value="1"/>
</dbReference>
<dbReference type="PROSITE" id="PS01058">
    <property type="entry name" value="SAICAR_SYNTHETASE_2"/>
    <property type="match status" value="1"/>
</dbReference>
<name>PUR7_BACC7</name>
<keyword id="KW-0067">ATP-binding</keyword>
<keyword id="KW-0436">Ligase</keyword>
<keyword id="KW-0547">Nucleotide-binding</keyword>
<keyword id="KW-0658">Purine biosynthesis</keyword>
<protein>
    <recommendedName>
        <fullName evidence="1">Phosphoribosylaminoimidazole-succinocarboxamide synthase</fullName>
        <ecNumber evidence="1">6.3.2.6</ecNumber>
    </recommendedName>
    <alternativeName>
        <fullName evidence="1">SAICAR synthetase</fullName>
    </alternativeName>
</protein>
<gene>
    <name evidence="1" type="primary">purC</name>
    <name type="ordered locus">BCAH187_A0364</name>
</gene>
<evidence type="ECO:0000255" key="1">
    <source>
        <dbReference type="HAMAP-Rule" id="MF_00137"/>
    </source>
</evidence>
<sequence length="239" mass="27236">MQKLELLYEGKAKRIYRTESADMVWVEYKDSATAFNGEKKETITGKGRLNNEITTLLFRKLQEVGIKTHFVEKLSETEQLVKKVSIIPLEVVTRNVIAGSLSKRLGMEEGTVLAEPIVEFYFKDDDLGDPLVTEDHIRVLNVASPEQVSVLRDMALQINQVLIDHFASCRVRLVDFKLEFGVTDEGEIILADEISPDTCRLWDETSNEKFDKDVFRRDLGNLTDAYEEILKRLGGISHV</sequence>
<comment type="catalytic activity">
    <reaction evidence="1">
        <text>5-amino-1-(5-phospho-D-ribosyl)imidazole-4-carboxylate + L-aspartate + ATP = (2S)-2-[5-amino-1-(5-phospho-beta-D-ribosyl)imidazole-4-carboxamido]succinate + ADP + phosphate + 2 H(+)</text>
        <dbReference type="Rhea" id="RHEA:22628"/>
        <dbReference type="ChEBI" id="CHEBI:15378"/>
        <dbReference type="ChEBI" id="CHEBI:29991"/>
        <dbReference type="ChEBI" id="CHEBI:30616"/>
        <dbReference type="ChEBI" id="CHEBI:43474"/>
        <dbReference type="ChEBI" id="CHEBI:58443"/>
        <dbReference type="ChEBI" id="CHEBI:77657"/>
        <dbReference type="ChEBI" id="CHEBI:456216"/>
        <dbReference type="EC" id="6.3.2.6"/>
    </reaction>
</comment>
<comment type="pathway">
    <text evidence="1">Purine metabolism; IMP biosynthesis via de novo pathway; 5-amino-1-(5-phospho-D-ribosyl)imidazole-4-carboxamide from 5-amino-1-(5-phospho-D-ribosyl)imidazole-4-carboxylate: step 1/2.</text>
</comment>
<comment type="similarity">
    <text evidence="1">Belongs to the SAICAR synthetase family.</text>
</comment>
<reference key="1">
    <citation type="submission" date="2008-10" db="EMBL/GenBank/DDBJ databases">
        <title>Genome sequence of Bacillus cereus AH187.</title>
        <authorList>
            <person name="Dodson R.J."/>
            <person name="Durkin A.S."/>
            <person name="Rosovitz M.J."/>
            <person name="Rasko D.A."/>
            <person name="Kolsto A.B."/>
            <person name="Okstad O.A."/>
            <person name="Ravel J."/>
            <person name="Sutton G."/>
        </authorList>
    </citation>
    <scope>NUCLEOTIDE SEQUENCE [LARGE SCALE GENOMIC DNA]</scope>
    <source>
        <strain>AH187</strain>
    </source>
</reference>